<reference key="1">
    <citation type="journal article" date="2007" name="J. Bacteriol.">
        <title>Genome sequence and analysis of the soil cellulolytic actinomycete Thermobifida fusca YX.</title>
        <authorList>
            <person name="Lykidis A."/>
            <person name="Mavromatis K."/>
            <person name="Ivanova N."/>
            <person name="Anderson I."/>
            <person name="Land M."/>
            <person name="DiBartolo G."/>
            <person name="Martinez M."/>
            <person name="Lapidus A."/>
            <person name="Lucas S."/>
            <person name="Copeland A."/>
            <person name="Richardson P."/>
            <person name="Wilson D.B."/>
            <person name="Kyrpides N."/>
        </authorList>
    </citation>
    <scope>NUCLEOTIDE SEQUENCE [LARGE SCALE GENOMIC DNA]</scope>
    <source>
        <strain>YX</strain>
    </source>
</reference>
<accession>Q47S64</accession>
<name>TRMD_THEFY</name>
<proteinExistence type="inferred from homology"/>
<keyword id="KW-0963">Cytoplasm</keyword>
<keyword id="KW-0489">Methyltransferase</keyword>
<keyword id="KW-0949">S-adenosyl-L-methionine</keyword>
<keyword id="KW-0808">Transferase</keyword>
<keyword id="KW-0819">tRNA processing</keyword>
<comment type="function">
    <text evidence="1">Specifically methylates guanosine-37 in various tRNAs.</text>
</comment>
<comment type="catalytic activity">
    <reaction evidence="1">
        <text>guanosine(37) in tRNA + S-adenosyl-L-methionine = N(1)-methylguanosine(37) in tRNA + S-adenosyl-L-homocysteine + H(+)</text>
        <dbReference type="Rhea" id="RHEA:36899"/>
        <dbReference type="Rhea" id="RHEA-COMP:10145"/>
        <dbReference type="Rhea" id="RHEA-COMP:10147"/>
        <dbReference type="ChEBI" id="CHEBI:15378"/>
        <dbReference type="ChEBI" id="CHEBI:57856"/>
        <dbReference type="ChEBI" id="CHEBI:59789"/>
        <dbReference type="ChEBI" id="CHEBI:73542"/>
        <dbReference type="ChEBI" id="CHEBI:74269"/>
        <dbReference type="EC" id="2.1.1.228"/>
    </reaction>
</comment>
<comment type="subunit">
    <text evidence="1">Homodimer.</text>
</comment>
<comment type="subcellular location">
    <subcellularLocation>
        <location evidence="1">Cytoplasm</location>
    </subcellularLocation>
</comment>
<comment type="similarity">
    <text evidence="1">Belongs to the RNA methyltransferase TrmD family.</text>
</comment>
<gene>
    <name evidence="1" type="primary">trmD</name>
    <name type="ordered locus">Tfu_0665</name>
</gene>
<sequence>MRIDIITIFPDYFTPLDLSLIGKARRSGLIDVRLHDLRRWTYDRHHTVDDTPYGGGPGMVMKPEPWGEALDEITADADAGTPRLILPTPSGLPFTQQDAVRLAKEPWLIFACGRYEGIDARVAVDAAQRMPVEELSIGDYVLNGGEVATLVIVEAISRLLPGVLGNVESITQDSFAPGTMDNLVEGPVYTKPPVWRGHEVPPILLSGHHAAIDRWRRDEALRKTARNRPDLIRRLDPESLDKRDREVLAEVGLQETSEPVAD</sequence>
<organism>
    <name type="scientific">Thermobifida fusca (strain YX)</name>
    <dbReference type="NCBI Taxonomy" id="269800"/>
    <lineage>
        <taxon>Bacteria</taxon>
        <taxon>Bacillati</taxon>
        <taxon>Actinomycetota</taxon>
        <taxon>Actinomycetes</taxon>
        <taxon>Streptosporangiales</taxon>
        <taxon>Nocardiopsidaceae</taxon>
        <taxon>Thermobifida</taxon>
    </lineage>
</organism>
<feature type="chain" id="PRO_0000257486" description="tRNA (guanine-N(1)-)-methyltransferase">
    <location>
        <begin position="1"/>
        <end position="262"/>
    </location>
</feature>
<feature type="binding site" evidence="1">
    <location>
        <position position="113"/>
    </location>
    <ligand>
        <name>S-adenosyl-L-methionine</name>
        <dbReference type="ChEBI" id="CHEBI:59789"/>
    </ligand>
</feature>
<feature type="binding site" evidence="1">
    <location>
        <begin position="137"/>
        <end position="142"/>
    </location>
    <ligand>
        <name>S-adenosyl-L-methionine</name>
        <dbReference type="ChEBI" id="CHEBI:59789"/>
    </ligand>
</feature>
<evidence type="ECO:0000255" key="1">
    <source>
        <dbReference type="HAMAP-Rule" id="MF_00605"/>
    </source>
</evidence>
<protein>
    <recommendedName>
        <fullName evidence="1">tRNA (guanine-N(1)-)-methyltransferase</fullName>
        <ecNumber evidence="1">2.1.1.228</ecNumber>
    </recommendedName>
    <alternativeName>
        <fullName evidence="1">M1G-methyltransferase</fullName>
    </alternativeName>
    <alternativeName>
        <fullName evidence="1">tRNA [GM37] methyltransferase</fullName>
    </alternativeName>
</protein>
<dbReference type="EC" id="2.1.1.228" evidence="1"/>
<dbReference type="EMBL" id="CP000088">
    <property type="protein sequence ID" value="AAZ54703.1"/>
    <property type="molecule type" value="Genomic_DNA"/>
</dbReference>
<dbReference type="RefSeq" id="WP_011291112.1">
    <property type="nucleotide sequence ID" value="NC_007333.1"/>
</dbReference>
<dbReference type="SMR" id="Q47S64"/>
<dbReference type="STRING" id="269800.Tfu_0665"/>
<dbReference type="KEGG" id="tfu:Tfu_0665"/>
<dbReference type="eggNOG" id="COG0336">
    <property type="taxonomic scope" value="Bacteria"/>
</dbReference>
<dbReference type="HOGENOM" id="CLU_047363_0_0_11"/>
<dbReference type="OrthoDB" id="9807416at2"/>
<dbReference type="GO" id="GO:0005829">
    <property type="term" value="C:cytosol"/>
    <property type="evidence" value="ECO:0007669"/>
    <property type="project" value="TreeGrafter"/>
</dbReference>
<dbReference type="GO" id="GO:0052906">
    <property type="term" value="F:tRNA (guanine(37)-N1)-methyltransferase activity"/>
    <property type="evidence" value="ECO:0007669"/>
    <property type="project" value="UniProtKB-UniRule"/>
</dbReference>
<dbReference type="GO" id="GO:0002939">
    <property type="term" value="P:tRNA N1-guanine methylation"/>
    <property type="evidence" value="ECO:0007669"/>
    <property type="project" value="TreeGrafter"/>
</dbReference>
<dbReference type="CDD" id="cd18080">
    <property type="entry name" value="TrmD-like"/>
    <property type="match status" value="1"/>
</dbReference>
<dbReference type="FunFam" id="1.10.1270.20:FF:000002">
    <property type="entry name" value="tRNA (guanine-N(1)-)-methyltransferase"/>
    <property type="match status" value="1"/>
</dbReference>
<dbReference type="FunFam" id="3.40.1280.10:FF:000001">
    <property type="entry name" value="tRNA (guanine-N(1)-)-methyltransferase"/>
    <property type="match status" value="1"/>
</dbReference>
<dbReference type="Gene3D" id="3.40.1280.10">
    <property type="match status" value="1"/>
</dbReference>
<dbReference type="Gene3D" id="1.10.1270.20">
    <property type="entry name" value="tRNA(m1g37)methyltransferase, domain 2"/>
    <property type="match status" value="1"/>
</dbReference>
<dbReference type="HAMAP" id="MF_00605">
    <property type="entry name" value="TrmD"/>
    <property type="match status" value="1"/>
</dbReference>
<dbReference type="InterPro" id="IPR029028">
    <property type="entry name" value="Alpha/beta_knot_MTases"/>
</dbReference>
<dbReference type="InterPro" id="IPR023148">
    <property type="entry name" value="tRNA_m1G_MeTrfase_C_sf"/>
</dbReference>
<dbReference type="InterPro" id="IPR002649">
    <property type="entry name" value="tRNA_m1G_MeTrfase_TrmD"/>
</dbReference>
<dbReference type="InterPro" id="IPR029026">
    <property type="entry name" value="tRNA_m1G_MTases_N"/>
</dbReference>
<dbReference type="InterPro" id="IPR016009">
    <property type="entry name" value="tRNA_MeTrfase_TRMD/TRM10"/>
</dbReference>
<dbReference type="NCBIfam" id="NF000648">
    <property type="entry name" value="PRK00026.1"/>
    <property type="match status" value="1"/>
</dbReference>
<dbReference type="NCBIfam" id="TIGR00088">
    <property type="entry name" value="trmD"/>
    <property type="match status" value="1"/>
</dbReference>
<dbReference type="PANTHER" id="PTHR46417">
    <property type="entry name" value="TRNA (GUANINE-N(1)-)-METHYLTRANSFERASE"/>
    <property type="match status" value="1"/>
</dbReference>
<dbReference type="PANTHER" id="PTHR46417:SF1">
    <property type="entry name" value="TRNA (GUANINE-N(1)-)-METHYLTRANSFERASE"/>
    <property type="match status" value="1"/>
</dbReference>
<dbReference type="Pfam" id="PF01746">
    <property type="entry name" value="tRNA_m1G_MT"/>
    <property type="match status" value="1"/>
</dbReference>
<dbReference type="PIRSF" id="PIRSF000386">
    <property type="entry name" value="tRNA_mtase"/>
    <property type="match status" value="1"/>
</dbReference>
<dbReference type="SUPFAM" id="SSF75217">
    <property type="entry name" value="alpha/beta knot"/>
    <property type="match status" value="1"/>
</dbReference>